<sequence>MALTVNVVGPAPWGFRISGGRDFHTPIIVTKVTERGKAEAADLRPGDIIVAINGESAESMLHAEAQSKIRQSASPLRLQLDRSQTASPGQINGEGSLDMLATRFQGSLRTHHNSQSSQRSACFSPASLSPRPDSPFSTPPPTSPIALSGENVIGCSFQSLTHSPGLAATHHLTYPGQPTSQQAGHSSPSDSTVRVLLHSPGRPSSPRLSSLDLEEDSEVFKMLQENRQGRAAPRQSSSFRLLQEALEAEERGGTPAFVPSSLSPKASLPTSRALATPPKLHTCEKCSVNISNQAVRIQEGRYRHPGCYTCADCGLNLKMRGHFWVGNELYCEKHARQRYSMPGTLSSQA</sequence>
<keyword id="KW-0963">Cytoplasm</keyword>
<keyword id="KW-0206">Cytoskeleton</keyword>
<keyword id="KW-0440">LIM domain</keyword>
<keyword id="KW-0479">Metal-binding</keyword>
<keyword id="KW-0597">Phosphoprotein</keyword>
<keyword id="KW-1185">Reference proteome</keyword>
<keyword id="KW-0862">Zinc</keyword>
<evidence type="ECO:0000250" key="1"/>
<evidence type="ECO:0000250" key="2">
    <source>
        <dbReference type="UniProtKB" id="Q8R1G6"/>
    </source>
</evidence>
<evidence type="ECO:0000250" key="3">
    <source>
        <dbReference type="UniProtKB" id="Q96JY6"/>
    </source>
</evidence>
<evidence type="ECO:0000255" key="4">
    <source>
        <dbReference type="PROSITE-ProRule" id="PRU00125"/>
    </source>
</evidence>
<evidence type="ECO:0000255" key="5">
    <source>
        <dbReference type="PROSITE-ProRule" id="PRU00143"/>
    </source>
</evidence>
<evidence type="ECO:0000256" key="6">
    <source>
        <dbReference type="SAM" id="MobiDB-lite"/>
    </source>
</evidence>
<evidence type="ECO:0000269" key="7">
    <source>
    </source>
</evidence>
<evidence type="ECO:0007744" key="8">
    <source>
    </source>
</evidence>
<protein>
    <recommendedName>
        <fullName>PDZ and LIM domain protein 2</fullName>
    </recommendedName>
</protein>
<feature type="chain" id="PRO_0000075865" description="PDZ and LIM domain protein 2">
    <location>
        <begin position="1"/>
        <end position="349"/>
    </location>
</feature>
<feature type="domain" description="PDZ" evidence="5">
    <location>
        <begin position="1"/>
        <end position="84"/>
    </location>
</feature>
<feature type="domain" description="LIM zinc-binding" evidence="4">
    <location>
        <begin position="281"/>
        <end position="341"/>
    </location>
</feature>
<feature type="region of interest" description="Disordered" evidence="6">
    <location>
        <begin position="72"/>
        <end position="95"/>
    </location>
</feature>
<feature type="region of interest" description="Disordered" evidence="6">
    <location>
        <begin position="108"/>
        <end position="147"/>
    </location>
</feature>
<feature type="region of interest" description="Disordered" evidence="6">
    <location>
        <begin position="168"/>
        <end position="212"/>
    </location>
</feature>
<feature type="region of interest" description="Disordered" evidence="6">
    <location>
        <begin position="250"/>
        <end position="272"/>
    </location>
</feature>
<feature type="compositionally biased region" description="Polar residues" evidence="6">
    <location>
        <begin position="81"/>
        <end position="90"/>
    </location>
</feature>
<feature type="compositionally biased region" description="Polar residues" evidence="6">
    <location>
        <begin position="108"/>
        <end position="121"/>
    </location>
</feature>
<feature type="compositionally biased region" description="Polar residues" evidence="6">
    <location>
        <begin position="176"/>
        <end position="192"/>
    </location>
</feature>
<feature type="compositionally biased region" description="Low complexity" evidence="6">
    <location>
        <begin position="199"/>
        <end position="211"/>
    </location>
</feature>
<feature type="compositionally biased region" description="Polar residues" evidence="6">
    <location>
        <begin position="260"/>
        <end position="270"/>
    </location>
</feature>
<feature type="modified residue" description="Phosphoserine" evidence="3">
    <location>
        <position position="124"/>
    </location>
</feature>
<feature type="modified residue" description="Phosphoserine" evidence="2">
    <location>
        <position position="127"/>
    </location>
</feature>
<feature type="modified residue" description="Phosphoserine" evidence="3">
    <location>
        <position position="129"/>
    </location>
</feature>
<feature type="modified residue" description="Phosphoserine" evidence="2">
    <location>
        <position position="134"/>
    </location>
</feature>
<feature type="modified residue" description="Phosphoserine" evidence="3">
    <location>
        <position position="137"/>
    </location>
</feature>
<feature type="modified residue" description="Phosphothreonine" evidence="2">
    <location>
        <position position="138"/>
    </location>
</feature>
<feature type="modified residue" description="Phosphothreonine" evidence="2">
    <location>
        <position position="142"/>
    </location>
</feature>
<feature type="modified residue" description="Phosphoserine" evidence="2">
    <location>
        <position position="143"/>
    </location>
</feature>
<feature type="modified residue" description="Phosphoserine" evidence="3">
    <location>
        <position position="163"/>
    </location>
</feature>
<feature type="modified residue" description="Phosphoserine" evidence="8">
    <location>
        <position position="199"/>
    </location>
</feature>
<feature type="modified residue" description="Phosphoserine" evidence="2">
    <location>
        <position position="204"/>
    </location>
</feature>
<feature type="modified residue" description="Phosphoserine" evidence="2">
    <location>
        <position position="205"/>
    </location>
</feature>
<feature type="modified residue" description="Phosphoserine" evidence="2">
    <location>
        <position position="209"/>
    </location>
</feature>
<feature type="modified residue" description="Phosphoserine" evidence="8">
    <location>
        <position position="210"/>
    </location>
</feature>
<feature type="modified residue" description="Phosphoserine" evidence="8">
    <location>
        <position position="263"/>
    </location>
</feature>
<name>PDLI2_RAT</name>
<gene>
    <name type="primary">Pdlim2</name>
</gene>
<reference key="1">
    <citation type="journal article" date="2004" name="Invest. Ophthalmol. Vis. Sci.">
        <title>Pdlim2, a novel PDZ-LIM domain protein, interacts with alpha-actinins and filamin A.</title>
        <authorList>
            <person name="Torrado M."/>
            <person name="Senatorov V.V."/>
            <person name="Trivedi R."/>
            <person name="Fariss R.N."/>
            <person name="Tomarev S.I."/>
        </authorList>
    </citation>
    <scope>NUCLEOTIDE SEQUENCE [MRNA]</scope>
    <scope>FUNCTION</scope>
    <scope>SUBCELLULAR LOCATION</scope>
    <scope>TISSUE SPECIFICITY</scope>
    <scope>INTERACTION WITH ACTN1; ACTN4; FLNA AND MYH9</scope>
    <source>
        <strain>Wistar</strain>
    </source>
</reference>
<reference key="2">
    <citation type="journal article" date="2004" name="Genome Res.">
        <title>The status, quality, and expansion of the NIH full-length cDNA project: the Mammalian Gene Collection (MGC).</title>
        <authorList>
            <consortium name="The MGC Project Team"/>
        </authorList>
    </citation>
    <scope>NUCLEOTIDE SEQUENCE [LARGE SCALE MRNA]</scope>
    <source>
        <tissue>Lung</tissue>
    </source>
</reference>
<reference key="3">
    <citation type="journal article" date="2012" name="Nat. Commun.">
        <title>Quantitative maps of protein phosphorylation sites across 14 different rat organs and tissues.</title>
        <authorList>
            <person name="Lundby A."/>
            <person name="Secher A."/>
            <person name="Lage K."/>
            <person name="Nordsborg N.B."/>
            <person name="Dmytriyev A."/>
            <person name="Lundby C."/>
            <person name="Olsen J.V."/>
        </authorList>
    </citation>
    <scope>PHOSPHORYLATION [LARGE SCALE ANALYSIS] AT SER-199; SER-210 AND SER-263</scope>
    <scope>IDENTIFICATION BY MASS SPECTROMETRY [LARGE SCALE ANALYSIS]</scope>
</reference>
<comment type="function">
    <text evidence="1 7">Probable adapter protein located at the actin cytoskeleton that promotes cell attachment. Necessary for the migratory capacity of epithelial cells. Overexpression enhances cell adhesion to collagen and fibronectin and suppresses anchorage independent growth. May contribute to tumor cell migratory capacity (By similarity).</text>
</comment>
<comment type="subunit">
    <text evidence="2 7">Interacts with alpha-actinins ACTN1 and ACTN4, FLNA and MYH9 (PubMed:15505042). Interacts (via LIM zinc-binding domain) with MKRN2 (By similarity).</text>
</comment>
<comment type="subcellular location">
    <subcellularLocation>
        <location evidence="7">Cytoplasm</location>
    </subcellularLocation>
    <subcellularLocation>
        <location evidence="7">Cytoplasm</location>
        <location evidence="7">Cytoskeleton</location>
    </subcellularLocation>
    <text>Localizes at the cytoskeleton. Colocalizes with beta-1 integrin (ITGB1) and alpha-actinin but not with paxillin (PXN).</text>
</comment>
<comment type="tissue specificity">
    <text evidence="7">Highly expressed in cornea and lung. Expressed at intermediate level in sclera and combined tissues of the eye irido-corneal angle. Specifically expressed in the corneal epithelial cells but not in other corneal layers.</text>
</comment>
<accession>Q6AYD6</accession>
<organism>
    <name type="scientific">Rattus norvegicus</name>
    <name type="common">Rat</name>
    <dbReference type="NCBI Taxonomy" id="10116"/>
    <lineage>
        <taxon>Eukaryota</taxon>
        <taxon>Metazoa</taxon>
        <taxon>Chordata</taxon>
        <taxon>Craniata</taxon>
        <taxon>Vertebrata</taxon>
        <taxon>Euteleostomi</taxon>
        <taxon>Mammalia</taxon>
        <taxon>Eutheria</taxon>
        <taxon>Euarchontoglires</taxon>
        <taxon>Glires</taxon>
        <taxon>Rodentia</taxon>
        <taxon>Myomorpha</taxon>
        <taxon>Muroidea</taxon>
        <taxon>Muridae</taxon>
        <taxon>Murinae</taxon>
        <taxon>Rattus</taxon>
    </lineage>
</organism>
<dbReference type="EMBL" id="AY531526">
    <property type="protein sequence ID" value="AAS99334.1"/>
    <property type="molecule type" value="mRNA"/>
</dbReference>
<dbReference type="EMBL" id="BC079091">
    <property type="protein sequence ID" value="AAH79091.1"/>
    <property type="molecule type" value="mRNA"/>
</dbReference>
<dbReference type="RefSeq" id="NP_001007623.1">
    <property type="nucleotide sequence ID" value="NM_001007622.1"/>
</dbReference>
<dbReference type="RefSeq" id="XP_006252318.1">
    <property type="nucleotide sequence ID" value="XM_006252256.5"/>
</dbReference>
<dbReference type="RefSeq" id="XP_006252319.1">
    <property type="nucleotide sequence ID" value="XM_006252257.5"/>
</dbReference>
<dbReference type="RefSeq" id="XP_006252320.1">
    <property type="nucleotide sequence ID" value="XM_006252258.2"/>
</dbReference>
<dbReference type="RefSeq" id="XP_006252321.1">
    <property type="nucleotide sequence ID" value="XM_006252259.3"/>
</dbReference>
<dbReference type="RefSeq" id="XP_008769045.1">
    <property type="nucleotide sequence ID" value="XM_008770823.2"/>
</dbReference>
<dbReference type="SMR" id="Q6AYD6"/>
<dbReference type="BioGRID" id="253175">
    <property type="interactions" value="5"/>
</dbReference>
<dbReference type="FunCoup" id="Q6AYD6">
    <property type="interactions" value="220"/>
</dbReference>
<dbReference type="STRING" id="10116.ENSRNOP00000011663"/>
<dbReference type="iPTMnet" id="Q6AYD6"/>
<dbReference type="PhosphoSitePlus" id="Q6AYD6"/>
<dbReference type="PaxDb" id="10116-ENSRNOP00000011663"/>
<dbReference type="Ensembl" id="ENSRNOT00000011663.5">
    <property type="protein sequence ID" value="ENSRNOP00000011663.3"/>
    <property type="gene ID" value="ENSRNOG00000008543.6"/>
</dbReference>
<dbReference type="GeneID" id="290354"/>
<dbReference type="KEGG" id="rno:290354"/>
<dbReference type="UCSC" id="RGD:1359203">
    <property type="organism name" value="rat"/>
</dbReference>
<dbReference type="AGR" id="RGD:1359203"/>
<dbReference type="CTD" id="64236"/>
<dbReference type="RGD" id="1359203">
    <property type="gene designation" value="Pdlim2"/>
</dbReference>
<dbReference type="eggNOG" id="KOG1703">
    <property type="taxonomic scope" value="Eukaryota"/>
</dbReference>
<dbReference type="GeneTree" id="ENSGT00940000160418"/>
<dbReference type="HOGENOM" id="CLU_038114_1_1_1"/>
<dbReference type="InParanoid" id="Q6AYD6"/>
<dbReference type="OMA" id="MRGHFWF"/>
<dbReference type="OrthoDB" id="445995at2759"/>
<dbReference type="PhylomeDB" id="Q6AYD6"/>
<dbReference type="TreeFam" id="TF106408"/>
<dbReference type="PRO" id="PR:Q6AYD6"/>
<dbReference type="Proteomes" id="UP000002494">
    <property type="component" value="Chromosome 15"/>
</dbReference>
<dbReference type="Bgee" id="ENSRNOG00000008543">
    <property type="expression patterns" value="Expressed in esophagus and 19 other cell types or tissues"/>
</dbReference>
<dbReference type="GO" id="GO:0005912">
    <property type="term" value="C:adherens junction"/>
    <property type="evidence" value="ECO:0000318"/>
    <property type="project" value="GO_Central"/>
</dbReference>
<dbReference type="GO" id="GO:0030864">
    <property type="term" value="C:cortical actin cytoskeleton"/>
    <property type="evidence" value="ECO:0000314"/>
    <property type="project" value="RGD"/>
</dbReference>
<dbReference type="GO" id="GO:0031941">
    <property type="term" value="C:filamentous actin"/>
    <property type="evidence" value="ECO:0000318"/>
    <property type="project" value="GO_Central"/>
</dbReference>
<dbReference type="GO" id="GO:0001725">
    <property type="term" value="C:stress fiber"/>
    <property type="evidence" value="ECO:0000314"/>
    <property type="project" value="RGD"/>
</dbReference>
<dbReference type="GO" id="GO:0030018">
    <property type="term" value="C:Z disc"/>
    <property type="evidence" value="ECO:0000318"/>
    <property type="project" value="GO_Central"/>
</dbReference>
<dbReference type="GO" id="GO:0003779">
    <property type="term" value="F:actin binding"/>
    <property type="evidence" value="ECO:0000318"/>
    <property type="project" value="GO_Central"/>
</dbReference>
<dbReference type="GO" id="GO:0051393">
    <property type="term" value="F:alpha-actinin binding"/>
    <property type="evidence" value="ECO:0000353"/>
    <property type="project" value="RGD"/>
</dbReference>
<dbReference type="GO" id="GO:0031005">
    <property type="term" value="F:filamin binding"/>
    <property type="evidence" value="ECO:0000353"/>
    <property type="project" value="RGD"/>
</dbReference>
<dbReference type="GO" id="GO:0046872">
    <property type="term" value="F:metal ion binding"/>
    <property type="evidence" value="ECO:0007669"/>
    <property type="project" value="UniProtKB-KW"/>
</dbReference>
<dbReference type="GO" id="GO:0051371">
    <property type="term" value="F:muscle alpha-actinin binding"/>
    <property type="evidence" value="ECO:0000353"/>
    <property type="project" value="RGD"/>
</dbReference>
<dbReference type="GO" id="GO:0032036">
    <property type="term" value="F:myosin heavy chain binding"/>
    <property type="evidence" value="ECO:0000353"/>
    <property type="project" value="RGD"/>
</dbReference>
<dbReference type="GO" id="GO:0031625">
    <property type="term" value="F:ubiquitin protein ligase binding"/>
    <property type="evidence" value="ECO:0000266"/>
    <property type="project" value="RGD"/>
</dbReference>
<dbReference type="GO" id="GO:0030036">
    <property type="term" value="P:actin cytoskeleton organization"/>
    <property type="evidence" value="ECO:0000318"/>
    <property type="project" value="GO_Central"/>
</dbReference>
<dbReference type="GO" id="GO:0007507">
    <property type="term" value="P:heart development"/>
    <property type="evidence" value="ECO:0000318"/>
    <property type="project" value="GO_Central"/>
</dbReference>
<dbReference type="GO" id="GO:0061061">
    <property type="term" value="P:muscle structure development"/>
    <property type="evidence" value="ECO:0000318"/>
    <property type="project" value="GO_Central"/>
</dbReference>
<dbReference type="GO" id="GO:0030163">
    <property type="term" value="P:protein catabolic process"/>
    <property type="evidence" value="ECO:0000266"/>
    <property type="project" value="RGD"/>
</dbReference>
<dbReference type="CDD" id="cd09449">
    <property type="entry name" value="LIM_Mystique"/>
    <property type="match status" value="1"/>
</dbReference>
<dbReference type="CDD" id="cd06753">
    <property type="entry name" value="PDZ_PDLIM-like"/>
    <property type="match status" value="1"/>
</dbReference>
<dbReference type="FunFam" id="2.10.110.10:FF:000085">
    <property type="entry name" value="PDZ and LIM domain 2 (mystique)"/>
    <property type="match status" value="1"/>
</dbReference>
<dbReference type="FunFam" id="2.30.42.10:FF:000130">
    <property type="entry name" value="PDZ and LIM domain 2 (mystique)"/>
    <property type="match status" value="1"/>
</dbReference>
<dbReference type="Gene3D" id="2.30.42.10">
    <property type="match status" value="1"/>
</dbReference>
<dbReference type="Gene3D" id="2.10.110.10">
    <property type="entry name" value="Cysteine Rich Protein"/>
    <property type="match status" value="1"/>
</dbReference>
<dbReference type="InterPro" id="IPR031847">
    <property type="entry name" value="PDLI1-4/Zasp-like_mid"/>
</dbReference>
<dbReference type="InterPro" id="IPR001478">
    <property type="entry name" value="PDZ"/>
</dbReference>
<dbReference type="InterPro" id="IPR050604">
    <property type="entry name" value="PDZ-LIM_domain"/>
</dbReference>
<dbReference type="InterPro" id="IPR036034">
    <property type="entry name" value="PDZ_sf"/>
</dbReference>
<dbReference type="InterPro" id="IPR001781">
    <property type="entry name" value="Znf_LIM"/>
</dbReference>
<dbReference type="PANTHER" id="PTHR24214:SF1">
    <property type="entry name" value="PDZ AND LIM DOMAIN PROTEIN 2"/>
    <property type="match status" value="1"/>
</dbReference>
<dbReference type="PANTHER" id="PTHR24214">
    <property type="entry name" value="PDZ AND LIM DOMAIN PROTEIN ZASP"/>
    <property type="match status" value="1"/>
</dbReference>
<dbReference type="Pfam" id="PF15936">
    <property type="entry name" value="DUF4749"/>
    <property type="match status" value="1"/>
</dbReference>
<dbReference type="Pfam" id="PF00412">
    <property type="entry name" value="LIM"/>
    <property type="match status" value="1"/>
</dbReference>
<dbReference type="Pfam" id="PF00595">
    <property type="entry name" value="PDZ"/>
    <property type="match status" value="1"/>
</dbReference>
<dbReference type="SMART" id="SM00132">
    <property type="entry name" value="LIM"/>
    <property type="match status" value="1"/>
</dbReference>
<dbReference type="SMART" id="SM00228">
    <property type="entry name" value="PDZ"/>
    <property type="match status" value="1"/>
</dbReference>
<dbReference type="SUPFAM" id="SSF57716">
    <property type="entry name" value="Glucocorticoid receptor-like (DNA-binding domain)"/>
    <property type="match status" value="1"/>
</dbReference>
<dbReference type="SUPFAM" id="SSF50156">
    <property type="entry name" value="PDZ domain-like"/>
    <property type="match status" value="1"/>
</dbReference>
<dbReference type="PROSITE" id="PS00478">
    <property type="entry name" value="LIM_DOMAIN_1"/>
    <property type="match status" value="1"/>
</dbReference>
<dbReference type="PROSITE" id="PS50023">
    <property type="entry name" value="LIM_DOMAIN_2"/>
    <property type="match status" value="1"/>
</dbReference>
<dbReference type="PROSITE" id="PS50106">
    <property type="entry name" value="PDZ"/>
    <property type="match status" value="1"/>
</dbReference>
<proteinExistence type="evidence at protein level"/>